<reference key="1">
    <citation type="journal article" date="2004" name="Genome Res.">
        <title>The status, quality, and expansion of the NIH full-length cDNA project: the Mammalian Gene Collection (MGC).</title>
        <authorList>
            <consortium name="The MGC Project Team"/>
        </authorList>
    </citation>
    <scope>NUCLEOTIDE SEQUENCE [LARGE SCALE MRNA]</scope>
    <source>
        <strain>FVB/N</strain>
        <tissue>Liver</tissue>
    </source>
</reference>
<reference key="2">
    <citation type="submission" date="2000-11" db="EMBL/GenBank/DDBJ databases">
        <title>Molecular cloning of the mouse sphingosine-1-phosphate receptor gene, Lpb4.</title>
        <authorList>
            <person name="Yang A.H."/>
            <person name="Zhang G."/>
            <person name="Chun J.J.M."/>
        </authorList>
    </citation>
    <scope>NUCLEOTIDE SEQUENCE [MRNA] OF 14-400</scope>
    <source>
        <strain>Swiss Webster / NIH</strain>
    </source>
</reference>
<reference key="3">
    <citation type="journal article" date="2005" name="Science">
        <title>The transcriptional landscape of the mammalian genome.</title>
        <authorList>
            <person name="Carninci P."/>
            <person name="Kasukawa T."/>
            <person name="Katayama S."/>
            <person name="Gough J."/>
            <person name="Frith M.C."/>
            <person name="Maeda N."/>
            <person name="Oyama R."/>
            <person name="Ravasi T."/>
            <person name="Lenhard B."/>
            <person name="Wells C."/>
            <person name="Kodzius R."/>
            <person name="Shimokawa K."/>
            <person name="Bajic V.B."/>
            <person name="Brenner S.E."/>
            <person name="Batalov S."/>
            <person name="Forrest A.R."/>
            <person name="Zavolan M."/>
            <person name="Davis M.J."/>
            <person name="Wilming L.G."/>
            <person name="Aidinis V."/>
            <person name="Allen J.E."/>
            <person name="Ambesi-Impiombato A."/>
            <person name="Apweiler R."/>
            <person name="Aturaliya R.N."/>
            <person name="Bailey T.L."/>
            <person name="Bansal M."/>
            <person name="Baxter L."/>
            <person name="Beisel K.W."/>
            <person name="Bersano T."/>
            <person name="Bono H."/>
            <person name="Chalk A.M."/>
            <person name="Chiu K.P."/>
            <person name="Choudhary V."/>
            <person name="Christoffels A."/>
            <person name="Clutterbuck D.R."/>
            <person name="Crowe M.L."/>
            <person name="Dalla E."/>
            <person name="Dalrymple B.P."/>
            <person name="de Bono B."/>
            <person name="Della Gatta G."/>
            <person name="di Bernardo D."/>
            <person name="Down T."/>
            <person name="Engstrom P."/>
            <person name="Fagiolini M."/>
            <person name="Faulkner G."/>
            <person name="Fletcher C.F."/>
            <person name="Fukushima T."/>
            <person name="Furuno M."/>
            <person name="Futaki S."/>
            <person name="Gariboldi M."/>
            <person name="Georgii-Hemming P."/>
            <person name="Gingeras T.R."/>
            <person name="Gojobori T."/>
            <person name="Green R.E."/>
            <person name="Gustincich S."/>
            <person name="Harbers M."/>
            <person name="Hayashi Y."/>
            <person name="Hensch T.K."/>
            <person name="Hirokawa N."/>
            <person name="Hill D."/>
            <person name="Huminiecki L."/>
            <person name="Iacono M."/>
            <person name="Ikeo K."/>
            <person name="Iwama A."/>
            <person name="Ishikawa T."/>
            <person name="Jakt M."/>
            <person name="Kanapin A."/>
            <person name="Katoh M."/>
            <person name="Kawasawa Y."/>
            <person name="Kelso J."/>
            <person name="Kitamura H."/>
            <person name="Kitano H."/>
            <person name="Kollias G."/>
            <person name="Krishnan S.P."/>
            <person name="Kruger A."/>
            <person name="Kummerfeld S.K."/>
            <person name="Kurochkin I.V."/>
            <person name="Lareau L.F."/>
            <person name="Lazarevic D."/>
            <person name="Lipovich L."/>
            <person name="Liu J."/>
            <person name="Liuni S."/>
            <person name="McWilliam S."/>
            <person name="Madan Babu M."/>
            <person name="Madera M."/>
            <person name="Marchionni L."/>
            <person name="Matsuda H."/>
            <person name="Matsuzawa S."/>
            <person name="Miki H."/>
            <person name="Mignone F."/>
            <person name="Miyake S."/>
            <person name="Morris K."/>
            <person name="Mottagui-Tabar S."/>
            <person name="Mulder N."/>
            <person name="Nakano N."/>
            <person name="Nakauchi H."/>
            <person name="Ng P."/>
            <person name="Nilsson R."/>
            <person name="Nishiguchi S."/>
            <person name="Nishikawa S."/>
            <person name="Nori F."/>
            <person name="Ohara O."/>
            <person name="Okazaki Y."/>
            <person name="Orlando V."/>
            <person name="Pang K.C."/>
            <person name="Pavan W.J."/>
            <person name="Pavesi G."/>
            <person name="Pesole G."/>
            <person name="Petrovsky N."/>
            <person name="Piazza S."/>
            <person name="Reed J."/>
            <person name="Reid J.F."/>
            <person name="Ring B.Z."/>
            <person name="Ringwald M."/>
            <person name="Rost B."/>
            <person name="Ruan Y."/>
            <person name="Salzberg S.L."/>
            <person name="Sandelin A."/>
            <person name="Schneider C."/>
            <person name="Schoenbach C."/>
            <person name="Sekiguchi K."/>
            <person name="Semple C.A."/>
            <person name="Seno S."/>
            <person name="Sessa L."/>
            <person name="Sheng Y."/>
            <person name="Shibata Y."/>
            <person name="Shimada H."/>
            <person name="Shimada K."/>
            <person name="Silva D."/>
            <person name="Sinclair B."/>
            <person name="Sperling S."/>
            <person name="Stupka E."/>
            <person name="Sugiura K."/>
            <person name="Sultana R."/>
            <person name="Takenaka Y."/>
            <person name="Taki K."/>
            <person name="Tammoja K."/>
            <person name="Tan S.L."/>
            <person name="Tang S."/>
            <person name="Taylor M.S."/>
            <person name="Tegner J."/>
            <person name="Teichmann S.A."/>
            <person name="Ueda H.R."/>
            <person name="van Nimwegen E."/>
            <person name="Verardo R."/>
            <person name="Wei C.L."/>
            <person name="Yagi K."/>
            <person name="Yamanishi H."/>
            <person name="Zabarovsky E."/>
            <person name="Zhu S."/>
            <person name="Zimmer A."/>
            <person name="Hide W."/>
            <person name="Bult C."/>
            <person name="Grimmond S.M."/>
            <person name="Teasdale R.D."/>
            <person name="Liu E.T."/>
            <person name="Brusic V."/>
            <person name="Quackenbush J."/>
            <person name="Wahlestedt C."/>
            <person name="Mattick J.S."/>
            <person name="Hume D.A."/>
            <person name="Kai C."/>
            <person name="Sasaki D."/>
            <person name="Tomaru Y."/>
            <person name="Fukuda S."/>
            <person name="Kanamori-Katayama M."/>
            <person name="Suzuki M."/>
            <person name="Aoki J."/>
            <person name="Arakawa T."/>
            <person name="Iida J."/>
            <person name="Imamura K."/>
            <person name="Itoh M."/>
            <person name="Kato T."/>
            <person name="Kawaji H."/>
            <person name="Kawagashira N."/>
            <person name="Kawashima T."/>
            <person name="Kojima M."/>
            <person name="Kondo S."/>
            <person name="Konno H."/>
            <person name="Nakano K."/>
            <person name="Ninomiya N."/>
            <person name="Nishio T."/>
            <person name="Okada M."/>
            <person name="Plessy C."/>
            <person name="Shibata K."/>
            <person name="Shiraki T."/>
            <person name="Suzuki S."/>
            <person name="Tagami M."/>
            <person name="Waki K."/>
            <person name="Watahiki A."/>
            <person name="Okamura-Oho Y."/>
            <person name="Suzuki H."/>
            <person name="Kawai J."/>
            <person name="Hayashizaki Y."/>
        </authorList>
    </citation>
    <scope>NUCLEOTIDE SEQUENCE [LARGE SCALE MRNA] OF 14-400</scope>
</reference>
<reference key="4">
    <citation type="journal article" date="2001" name="Biochemistry">
        <title>Characterization of the human and mouse sphingosine 1-phosphate receptor, S1P5 (Edg-8): structure-activity relationship of sphingosine1-phosphate receptors.</title>
        <authorList>
            <person name="Im D.-S."/>
            <person name="Clemens J."/>
            <person name="Macdonald T.L."/>
            <person name="Lynch K.R."/>
        </authorList>
    </citation>
    <scope>TISSUE SPECIFICITY</scope>
</reference>
<reference key="5">
    <citation type="journal article" date="2005" name="J. Neurosci.">
        <title>Edg8/S1P5: an oligodendroglial receptor with dual function on process retraction and cell survival.</title>
        <authorList>
            <person name="Jaillard C."/>
            <person name="Harrison S."/>
            <person name="Stankoff B."/>
            <person name="Aigrot M.S."/>
            <person name="Calver A.R."/>
            <person name="Duddy G."/>
            <person name="Walsh F.S."/>
            <person name="Pangalos M.N."/>
            <person name="Arimura N."/>
            <person name="Kaibuchi K."/>
            <person name="Zalc B."/>
            <person name="Lubetzki C."/>
        </authorList>
    </citation>
    <scope>TISSUE SPECIFICITY</scope>
    <scope>DEVELOPMENTAL STAGE</scope>
    <scope>FUNCTION</scope>
</reference>
<reference key="6">
    <citation type="journal article" date="2010" name="Cell">
        <title>A tissue-specific atlas of mouse protein phosphorylation and expression.</title>
        <authorList>
            <person name="Huttlin E.L."/>
            <person name="Jedrychowski M.P."/>
            <person name="Elias J.E."/>
            <person name="Goswami T."/>
            <person name="Rad R."/>
            <person name="Beausoleil S.A."/>
            <person name="Villen J."/>
            <person name="Haas W."/>
            <person name="Sowa M.E."/>
            <person name="Gygi S.P."/>
        </authorList>
    </citation>
    <scope>PHOSPHORYLATION [LARGE SCALE ANALYSIS] AT SER-340</scope>
    <scope>IDENTIFICATION BY MASS SPECTROMETRY [LARGE SCALE ANALYSIS]</scope>
    <source>
        <tissue>Brain</tissue>
    </source>
</reference>
<comment type="function">
    <text evidence="1 7">Receptor for the lysosphingolipid sphingosine 1-phosphate (S1P). S1P is a bioactive lysophospholipid that elicits diverse physiological effect on most types of cells and tissues. Is coupled to both the G(i/0)alpha and G(12) subclass of heteromeric G-proteins (By similarity). S1P activation on oligodendroglial cells modulates two distinct functional pathways mediating either process retraction or cell survival. S1P activation on O4-positive pre-oligodendrocytes induces process retraction via a Rho kinase/collapsin response-mediated protein signaling pathway. The S1P-induced survival of mature oligodendrocytes is mediated through a pertussis toxin-sensitive, Akt-dependent pathway. S1P activation on oligodendroglial cells modulates two distinct functional pathways mediating either process retraction or cell survival. These effects depend on the developmental stage of the cell.</text>
</comment>
<comment type="subcellular location">
    <subcellularLocation>
        <location>Cell membrane</location>
        <topology>Multi-pass membrane protein</topology>
    </subcellularLocation>
</comment>
<comment type="tissue specificity">
    <text evidence="6 7">Expressed in spleen and brain. In the CNS expression is restricted to oligodendrocytes.</text>
</comment>
<comment type="developmental stage">
    <text evidence="7">Expressed in 7-day and 17-day embryos, but not in 11-day and 15-day embryos, implying its role in mammalian development. In oligodendrocytes, expressed throughout development from the immature stages to the mature myelin-froming cell.</text>
</comment>
<comment type="similarity">
    <text evidence="4">Belongs to the G-protein coupled receptor 1 family.</text>
</comment>
<feature type="chain" id="PRO_0000069437" description="Sphingosine 1-phosphate receptor 5">
    <location>
        <begin position="1"/>
        <end position="400"/>
    </location>
</feature>
<feature type="topological domain" description="Extracellular" evidence="1">
    <location>
        <begin position="1"/>
        <end position="41"/>
    </location>
</feature>
<feature type="transmembrane region" description="Helical; Name=1" evidence="1">
    <location>
        <begin position="42"/>
        <end position="62"/>
    </location>
</feature>
<feature type="topological domain" description="Cytoplasmic" evidence="1">
    <location>
        <begin position="63"/>
        <end position="68"/>
    </location>
</feature>
<feature type="transmembrane region" description="Helical; Name=2" evidence="1">
    <location>
        <begin position="69"/>
        <end position="89"/>
    </location>
</feature>
<feature type="topological domain" description="Extracellular" evidence="1">
    <location>
        <begin position="90"/>
        <end position="111"/>
    </location>
</feature>
<feature type="transmembrane region" description="Helical; Name=3" evidence="1">
    <location>
        <begin position="112"/>
        <end position="132"/>
    </location>
</feature>
<feature type="topological domain" description="Cytoplasmic" evidence="1">
    <location>
        <begin position="133"/>
        <end position="151"/>
    </location>
</feature>
<feature type="transmembrane region" description="Helical; Name=4" evidence="1">
    <location>
        <begin position="152"/>
        <end position="172"/>
    </location>
</feature>
<feature type="topological domain" description="Extracellular" evidence="1">
    <location>
        <begin position="173"/>
        <end position="192"/>
    </location>
</feature>
<feature type="transmembrane region" description="Helical; Name=5" evidence="1">
    <location>
        <begin position="193"/>
        <end position="213"/>
    </location>
</feature>
<feature type="topological domain" description="Cytoplasmic" evidence="1">
    <location>
        <begin position="214"/>
        <end position="253"/>
    </location>
</feature>
<feature type="transmembrane region" description="Helical; Name=6" evidence="1">
    <location>
        <begin position="254"/>
        <end position="274"/>
    </location>
</feature>
<feature type="topological domain" description="Extracellular" evidence="1">
    <location>
        <begin position="275"/>
        <end position="288"/>
    </location>
</feature>
<feature type="transmembrane region" description="Helical; Name=7" evidence="1">
    <location>
        <begin position="289"/>
        <end position="309"/>
    </location>
</feature>
<feature type="topological domain" description="Cytoplasmic" evidence="1">
    <location>
        <begin position="310"/>
        <end position="400"/>
    </location>
</feature>
<feature type="region of interest" description="Disordered" evidence="5">
    <location>
        <begin position="331"/>
        <end position="400"/>
    </location>
</feature>
<feature type="compositionally biased region" description="Polar residues" evidence="5">
    <location>
        <begin position="360"/>
        <end position="400"/>
    </location>
</feature>
<feature type="modified residue" description="Phosphoserine" evidence="8">
    <location>
        <position position="340"/>
    </location>
</feature>
<feature type="modified residue" description="Phosphoserine" evidence="2">
    <location>
        <position position="342"/>
    </location>
</feature>
<feature type="modified residue" description="Phosphoserine" evidence="2">
    <location>
        <position position="384"/>
    </location>
</feature>
<feature type="lipid moiety-binding region" description="S-palmitoyl cysteine" evidence="1">
    <location>
        <position position="324"/>
    </location>
</feature>
<feature type="glycosylation site" description="N-linked (GlcNAc...) asparagine" evidence="3">
    <location>
        <position position="20"/>
    </location>
</feature>
<proteinExistence type="evidence at protein level"/>
<organism>
    <name type="scientific">Mus musculus</name>
    <name type="common">Mouse</name>
    <dbReference type="NCBI Taxonomy" id="10090"/>
    <lineage>
        <taxon>Eukaryota</taxon>
        <taxon>Metazoa</taxon>
        <taxon>Chordata</taxon>
        <taxon>Craniata</taxon>
        <taxon>Vertebrata</taxon>
        <taxon>Euteleostomi</taxon>
        <taxon>Mammalia</taxon>
        <taxon>Eutheria</taxon>
        <taxon>Euarchontoglires</taxon>
        <taxon>Glires</taxon>
        <taxon>Rodentia</taxon>
        <taxon>Myomorpha</taxon>
        <taxon>Muroidea</taxon>
        <taxon>Muridae</taxon>
        <taxon>Murinae</taxon>
        <taxon>Mus</taxon>
        <taxon>Mus</taxon>
    </lineage>
</organism>
<sequence length="400" mass="42331">MEPGLLRPAPVSEVIVLHYNYTGKLRGARYQPGAGLRADAAVCLAVCAFIVLENLAVLLVLVRHPRFHAPMFLLLGSLTLSDLLAGAAYATNILLSGPLTLRLSPALWFAREGGVFVALAASVLSLLAIALERHLTMARRGPAPAASRARTLAMAVAAWGASLLLGLLPALGWNCLGRLETCSTVLPLYAKAYVLFCVLAFLGILAAICALYARIYCQVRANARRLRAGPGSRRATSSSRSRHTPRSLALLRTLSVVLLAFVACWGPLFLLLLLDVACPARACPVLLQADPFLGLAMANSLLNPIIYTFTNRDLRHALLRLLCCGRGPCNQDSSNSLQRSPSAAGPSGGGLRRCLPPTLDRSSSPSEHLSPQQDGVDTSCSTGSPGVATANRSLVPTATD</sequence>
<evidence type="ECO:0000250" key="1"/>
<evidence type="ECO:0000250" key="2">
    <source>
        <dbReference type="UniProtKB" id="Q9JKM5"/>
    </source>
</evidence>
<evidence type="ECO:0000255" key="3"/>
<evidence type="ECO:0000255" key="4">
    <source>
        <dbReference type="PROSITE-ProRule" id="PRU00521"/>
    </source>
</evidence>
<evidence type="ECO:0000256" key="5">
    <source>
        <dbReference type="SAM" id="MobiDB-lite"/>
    </source>
</evidence>
<evidence type="ECO:0000269" key="6">
    <source>
    </source>
</evidence>
<evidence type="ECO:0000269" key="7">
    <source>
    </source>
</evidence>
<evidence type="ECO:0007744" key="8">
    <source>
    </source>
</evidence>
<accession>Q91X56</accession>
<accession>Q99MN8</accession>
<name>S1PR5_MOUSE</name>
<gene>
    <name type="primary">S1pr5</name>
    <name type="synonym">Edg8</name>
    <name type="synonym">Lpb4</name>
</gene>
<dbReference type="EMBL" id="BC012232">
    <property type="protein sequence ID" value="AAH12232.1"/>
    <property type="molecule type" value="mRNA"/>
</dbReference>
<dbReference type="EMBL" id="AF327535">
    <property type="protein sequence ID" value="AAK15485.1"/>
    <property type="molecule type" value="mRNA"/>
</dbReference>
<dbReference type="EMBL" id="AK081126">
    <property type="protein sequence ID" value="BAC38142.1"/>
    <property type="molecule type" value="mRNA"/>
</dbReference>
<dbReference type="CCDS" id="CCDS22898.1"/>
<dbReference type="RefSeq" id="NP_444420.1">
    <property type="nucleotide sequence ID" value="NM_053190.2"/>
</dbReference>
<dbReference type="SMR" id="Q91X56"/>
<dbReference type="BioGRID" id="220483">
    <property type="interactions" value="1"/>
</dbReference>
<dbReference type="FunCoup" id="Q91X56">
    <property type="interactions" value="1320"/>
</dbReference>
<dbReference type="STRING" id="10090.ENSMUSP00000113843"/>
<dbReference type="GuidetoPHARMACOLOGY" id="279"/>
<dbReference type="GlyCosmos" id="Q91X56">
    <property type="glycosylation" value="1 site, No reported glycans"/>
</dbReference>
<dbReference type="GlyGen" id="Q91X56">
    <property type="glycosylation" value="1 site, 1 N-linked glycan (1 site)"/>
</dbReference>
<dbReference type="iPTMnet" id="Q91X56"/>
<dbReference type="PhosphoSitePlus" id="Q91X56"/>
<dbReference type="PaxDb" id="10090-ENSMUSP00000113843"/>
<dbReference type="ProteomicsDB" id="256667"/>
<dbReference type="Antibodypedia" id="12897">
    <property type="antibodies" value="405 antibodies from 36 providers"/>
</dbReference>
<dbReference type="DNASU" id="94226"/>
<dbReference type="Ensembl" id="ENSMUST00000122088.2">
    <property type="protein sequence ID" value="ENSMUSP00000113843.2"/>
    <property type="gene ID" value="ENSMUSG00000045087.9"/>
</dbReference>
<dbReference type="GeneID" id="94226"/>
<dbReference type="KEGG" id="mmu:94226"/>
<dbReference type="UCSC" id="uc009oks.2">
    <property type="organism name" value="mouse"/>
</dbReference>
<dbReference type="AGR" id="MGI:2150641"/>
<dbReference type="CTD" id="53637"/>
<dbReference type="MGI" id="MGI:2150641">
    <property type="gene designation" value="S1pr5"/>
</dbReference>
<dbReference type="VEuPathDB" id="HostDB:ENSMUSG00000045087"/>
<dbReference type="eggNOG" id="ENOG502QSWN">
    <property type="taxonomic scope" value="Eukaryota"/>
</dbReference>
<dbReference type="GeneTree" id="ENSGT01050000244887"/>
<dbReference type="HOGENOM" id="CLU_047979_1_0_1"/>
<dbReference type="InParanoid" id="Q91X56"/>
<dbReference type="OMA" id="PCLMTRD"/>
<dbReference type="OrthoDB" id="9449747at2759"/>
<dbReference type="PhylomeDB" id="Q91X56"/>
<dbReference type="TreeFam" id="TF330052"/>
<dbReference type="Reactome" id="R-MMU-418594">
    <property type="pathway name" value="G alpha (i) signalling events"/>
</dbReference>
<dbReference type="Reactome" id="R-MMU-419408">
    <property type="pathway name" value="Lysosphingolipid and LPA receptors"/>
</dbReference>
<dbReference type="BioGRID-ORCS" id="94226">
    <property type="hits" value="3 hits in 81 CRISPR screens"/>
</dbReference>
<dbReference type="PRO" id="PR:Q91X56"/>
<dbReference type="Proteomes" id="UP000000589">
    <property type="component" value="Chromosome 9"/>
</dbReference>
<dbReference type="RNAct" id="Q91X56">
    <property type="molecule type" value="protein"/>
</dbReference>
<dbReference type="Bgee" id="ENSMUSG00000045087">
    <property type="expression patterns" value="Expressed in lumbar subsegment of spinal cord and 114 other cell types or tissues"/>
</dbReference>
<dbReference type="GO" id="GO:0005886">
    <property type="term" value="C:plasma membrane"/>
    <property type="evidence" value="ECO:0000304"/>
    <property type="project" value="MGI"/>
</dbReference>
<dbReference type="GO" id="GO:0098793">
    <property type="term" value="C:presynapse"/>
    <property type="evidence" value="ECO:0000314"/>
    <property type="project" value="SynGO"/>
</dbReference>
<dbReference type="GO" id="GO:0004930">
    <property type="term" value="F:G protein-coupled receptor activity"/>
    <property type="evidence" value="ECO:0000304"/>
    <property type="project" value="MGI"/>
</dbReference>
<dbReference type="GO" id="GO:0038036">
    <property type="term" value="F:sphingosine-1-phosphate receptor activity"/>
    <property type="evidence" value="ECO:0007669"/>
    <property type="project" value="InterPro"/>
</dbReference>
<dbReference type="GO" id="GO:0007186">
    <property type="term" value="P:G protein-coupled receptor signaling pathway"/>
    <property type="evidence" value="ECO:0000304"/>
    <property type="project" value="MGI"/>
</dbReference>
<dbReference type="FunFam" id="1.20.1070.10:FF:000251">
    <property type="entry name" value="Sphingosine 1-phosphate receptor 5"/>
    <property type="match status" value="1"/>
</dbReference>
<dbReference type="Gene3D" id="1.20.1070.10">
    <property type="entry name" value="Rhodopsin 7-helix transmembrane proteins"/>
    <property type="match status" value="1"/>
</dbReference>
<dbReference type="InterPro" id="IPR005386">
    <property type="entry name" value="EDG8_S1P_rcpt"/>
</dbReference>
<dbReference type="InterPro" id="IPR000276">
    <property type="entry name" value="GPCR_Rhodpsn"/>
</dbReference>
<dbReference type="InterPro" id="IPR017452">
    <property type="entry name" value="GPCR_Rhodpsn_7TM"/>
</dbReference>
<dbReference type="InterPro" id="IPR004061">
    <property type="entry name" value="S1P_rcpt"/>
</dbReference>
<dbReference type="PANTHER" id="PTHR22750">
    <property type="entry name" value="G-PROTEIN COUPLED RECEPTOR"/>
    <property type="match status" value="1"/>
</dbReference>
<dbReference type="Pfam" id="PF00001">
    <property type="entry name" value="7tm_1"/>
    <property type="match status" value="1"/>
</dbReference>
<dbReference type="PRINTS" id="PR01561">
    <property type="entry name" value="EDG8RECEPTOR"/>
</dbReference>
<dbReference type="PRINTS" id="PR00237">
    <property type="entry name" value="GPCRRHODOPSN"/>
</dbReference>
<dbReference type="PRINTS" id="PR01523">
    <property type="entry name" value="S1PRECEPTOR"/>
</dbReference>
<dbReference type="SMART" id="SM01381">
    <property type="entry name" value="7TM_GPCR_Srsx"/>
    <property type="match status" value="1"/>
</dbReference>
<dbReference type="SUPFAM" id="SSF81321">
    <property type="entry name" value="Family A G protein-coupled receptor-like"/>
    <property type="match status" value="1"/>
</dbReference>
<dbReference type="PROSITE" id="PS00237">
    <property type="entry name" value="G_PROTEIN_RECEP_F1_1"/>
    <property type="match status" value="1"/>
</dbReference>
<dbReference type="PROSITE" id="PS50262">
    <property type="entry name" value="G_PROTEIN_RECEP_F1_2"/>
    <property type="match status" value="1"/>
</dbReference>
<protein>
    <recommendedName>
        <fullName>Sphingosine 1-phosphate receptor 5</fullName>
        <shortName>S1P receptor 5</shortName>
        <shortName>S1P5</shortName>
    </recommendedName>
    <alternativeName>
        <fullName>Endothelial differentiation G-protein-coupled receptor 8</fullName>
    </alternativeName>
    <alternativeName>
        <fullName>Lysophospholipid receptor B4</fullName>
    </alternativeName>
    <alternativeName>
        <fullName>Sphingosine 1-phosphate receptor Edg-8</fullName>
        <shortName>S1P receptor Edg-8</shortName>
    </alternativeName>
</protein>
<keyword id="KW-1003">Cell membrane</keyword>
<keyword id="KW-0297">G-protein coupled receptor</keyword>
<keyword id="KW-0325">Glycoprotein</keyword>
<keyword id="KW-0449">Lipoprotein</keyword>
<keyword id="KW-0472">Membrane</keyword>
<keyword id="KW-0564">Palmitate</keyword>
<keyword id="KW-0597">Phosphoprotein</keyword>
<keyword id="KW-0675">Receptor</keyword>
<keyword id="KW-1185">Reference proteome</keyword>
<keyword id="KW-0807">Transducer</keyword>
<keyword id="KW-0812">Transmembrane</keyword>
<keyword id="KW-1133">Transmembrane helix</keyword>